<organism>
    <name type="scientific">Pongo abelii</name>
    <name type="common">Sumatran orangutan</name>
    <name type="synonym">Pongo pygmaeus abelii</name>
    <dbReference type="NCBI Taxonomy" id="9601"/>
    <lineage>
        <taxon>Eukaryota</taxon>
        <taxon>Metazoa</taxon>
        <taxon>Chordata</taxon>
        <taxon>Craniata</taxon>
        <taxon>Vertebrata</taxon>
        <taxon>Euteleostomi</taxon>
        <taxon>Mammalia</taxon>
        <taxon>Eutheria</taxon>
        <taxon>Euarchontoglires</taxon>
        <taxon>Primates</taxon>
        <taxon>Haplorrhini</taxon>
        <taxon>Catarrhini</taxon>
        <taxon>Hominidae</taxon>
        <taxon>Pongo</taxon>
    </lineage>
</organism>
<dbReference type="EMBL" id="CR859055">
    <property type="protein sequence ID" value="CAH91248.1"/>
    <property type="molecule type" value="mRNA"/>
</dbReference>
<dbReference type="EMBL" id="CR859189">
    <property type="protein sequence ID" value="CAH91377.1"/>
    <property type="molecule type" value="mRNA"/>
</dbReference>
<dbReference type="RefSeq" id="NP_001125737.1">
    <property type="nucleotide sequence ID" value="NM_001132265.1"/>
</dbReference>
<dbReference type="RefSeq" id="NP_001128811.1">
    <property type="nucleotide sequence ID" value="NM_001135339.1"/>
</dbReference>
<dbReference type="SMR" id="Q5RAG2"/>
<dbReference type="FunCoup" id="Q5RAG2">
    <property type="interactions" value="1526"/>
</dbReference>
<dbReference type="STRING" id="9601.ENSPPYP00000005290"/>
<dbReference type="GeneID" id="100172662"/>
<dbReference type="KEGG" id="pon:100172662"/>
<dbReference type="CTD" id="23344"/>
<dbReference type="eggNOG" id="KOG1012">
    <property type="taxonomic scope" value="Eukaryota"/>
</dbReference>
<dbReference type="InParanoid" id="Q5RAG2"/>
<dbReference type="OrthoDB" id="1029639at2759"/>
<dbReference type="Proteomes" id="UP000001595">
    <property type="component" value="Unplaced"/>
</dbReference>
<dbReference type="GO" id="GO:0005789">
    <property type="term" value="C:endoplasmic reticulum membrane"/>
    <property type="evidence" value="ECO:0000250"/>
    <property type="project" value="UniProtKB"/>
</dbReference>
<dbReference type="GO" id="GO:0005886">
    <property type="term" value="C:plasma membrane"/>
    <property type="evidence" value="ECO:0007669"/>
    <property type="project" value="UniProtKB-SubCell"/>
</dbReference>
<dbReference type="GO" id="GO:0005509">
    <property type="term" value="F:calcium ion binding"/>
    <property type="evidence" value="ECO:0007669"/>
    <property type="project" value="TreeGrafter"/>
</dbReference>
<dbReference type="GO" id="GO:0005544">
    <property type="term" value="F:calcium-dependent phospholipid binding"/>
    <property type="evidence" value="ECO:0007669"/>
    <property type="project" value="TreeGrafter"/>
</dbReference>
<dbReference type="GO" id="GO:0031210">
    <property type="term" value="F:phosphatidylcholine binding"/>
    <property type="evidence" value="ECO:0007669"/>
    <property type="project" value="TreeGrafter"/>
</dbReference>
<dbReference type="GO" id="GO:0008429">
    <property type="term" value="F:phosphatidylethanolamine binding"/>
    <property type="evidence" value="ECO:0007669"/>
    <property type="project" value="TreeGrafter"/>
</dbReference>
<dbReference type="GO" id="GO:0035091">
    <property type="term" value="F:phosphatidylinositol binding"/>
    <property type="evidence" value="ECO:0007669"/>
    <property type="project" value="TreeGrafter"/>
</dbReference>
<dbReference type="GO" id="GO:0120014">
    <property type="term" value="F:phospholipid transfer activity"/>
    <property type="evidence" value="ECO:0000250"/>
    <property type="project" value="UniProtKB"/>
</dbReference>
<dbReference type="GO" id="GO:0061817">
    <property type="term" value="P:endoplasmic reticulum-plasma membrane tethering"/>
    <property type="evidence" value="ECO:0007669"/>
    <property type="project" value="InterPro"/>
</dbReference>
<dbReference type="GO" id="GO:0120009">
    <property type="term" value="P:intermembrane lipid transfer"/>
    <property type="evidence" value="ECO:0000250"/>
    <property type="project" value="UniProtKB"/>
</dbReference>
<dbReference type="CDD" id="cd08391">
    <property type="entry name" value="C2A_C2C_Synaptotagmin_like"/>
    <property type="match status" value="2"/>
</dbReference>
<dbReference type="CDD" id="cd04050">
    <property type="entry name" value="C2B_Synaptotagmin-like"/>
    <property type="match status" value="2"/>
</dbReference>
<dbReference type="CDD" id="cd04030">
    <property type="entry name" value="C2C_KIAA1228"/>
    <property type="match status" value="1"/>
</dbReference>
<dbReference type="CDD" id="cd21679">
    <property type="entry name" value="SMP_ESyt1"/>
    <property type="match status" value="1"/>
</dbReference>
<dbReference type="FunFam" id="2.60.40.150:FF:000025">
    <property type="entry name" value="Extended synaptotagmin 2"/>
    <property type="match status" value="1"/>
</dbReference>
<dbReference type="FunFam" id="2.60.40.150:FF:000106">
    <property type="entry name" value="extended synaptotagmin-1 isoform X1"/>
    <property type="match status" value="1"/>
</dbReference>
<dbReference type="FunFam" id="2.60.40.150:FF:000120">
    <property type="entry name" value="extended synaptotagmin-1 isoform X1"/>
    <property type="match status" value="1"/>
</dbReference>
<dbReference type="FunFam" id="2.60.40.150:FF:000124">
    <property type="entry name" value="extended synaptotagmin-1 isoform X1"/>
    <property type="match status" value="1"/>
</dbReference>
<dbReference type="FunFam" id="2.60.40.150:FF:000139">
    <property type="entry name" value="extended synaptotagmin-1 isoform X1"/>
    <property type="match status" value="1"/>
</dbReference>
<dbReference type="Gene3D" id="2.60.40.150">
    <property type="entry name" value="C2 domain"/>
    <property type="match status" value="5"/>
</dbReference>
<dbReference type="InterPro" id="IPR000008">
    <property type="entry name" value="C2_dom"/>
</dbReference>
<dbReference type="InterPro" id="IPR035892">
    <property type="entry name" value="C2_domain_sf"/>
</dbReference>
<dbReference type="InterPro" id="IPR037752">
    <property type="entry name" value="C2C_KIAA1228"/>
</dbReference>
<dbReference type="InterPro" id="IPR037733">
    <property type="entry name" value="Ext_Synaptotagmin_C2A"/>
</dbReference>
<dbReference type="InterPro" id="IPR037749">
    <property type="entry name" value="Ext_Synaptotagmin_C2B"/>
</dbReference>
<dbReference type="InterPro" id="IPR051634">
    <property type="entry name" value="Extended_Synaptotagmin"/>
</dbReference>
<dbReference type="InterPro" id="IPR031468">
    <property type="entry name" value="SMP_LBD"/>
</dbReference>
<dbReference type="InterPro" id="IPR039010">
    <property type="entry name" value="Synaptotagmin_SMP"/>
</dbReference>
<dbReference type="PANTHER" id="PTHR45761:SF3">
    <property type="entry name" value="EXTENDED SYNAPTOTAGMIN-1"/>
    <property type="match status" value="1"/>
</dbReference>
<dbReference type="PANTHER" id="PTHR45761">
    <property type="entry name" value="EXTENDED SYNAPTOTAGMIN-LIKE PROTEIN 2, ISOFORM C"/>
    <property type="match status" value="1"/>
</dbReference>
<dbReference type="Pfam" id="PF00168">
    <property type="entry name" value="C2"/>
    <property type="match status" value="5"/>
</dbReference>
<dbReference type="Pfam" id="PF17047">
    <property type="entry name" value="SMP_LBD"/>
    <property type="match status" value="1"/>
</dbReference>
<dbReference type="PRINTS" id="PR00360">
    <property type="entry name" value="C2DOMAIN"/>
</dbReference>
<dbReference type="SMART" id="SM00239">
    <property type="entry name" value="C2"/>
    <property type="match status" value="5"/>
</dbReference>
<dbReference type="SUPFAM" id="SSF49562">
    <property type="entry name" value="C2 domain (Calcium/lipid-binding domain, CaLB)"/>
    <property type="match status" value="5"/>
</dbReference>
<dbReference type="PROSITE" id="PS50004">
    <property type="entry name" value="C2"/>
    <property type="match status" value="5"/>
</dbReference>
<dbReference type="PROSITE" id="PS51847">
    <property type="entry name" value="SMP"/>
    <property type="match status" value="1"/>
</dbReference>
<keyword id="KW-0007">Acetylation</keyword>
<keyword id="KW-0106">Calcium</keyword>
<keyword id="KW-1003">Cell membrane</keyword>
<keyword id="KW-0175">Coiled coil</keyword>
<keyword id="KW-0256">Endoplasmic reticulum</keyword>
<keyword id="KW-0445">Lipid transport</keyword>
<keyword id="KW-0446">Lipid-binding</keyword>
<keyword id="KW-0472">Membrane</keyword>
<keyword id="KW-0479">Metal-binding</keyword>
<keyword id="KW-0597">Phosphoprotein</keyword>
<keyword id="KW-1185">Reference proteome</keyword>
<keyword id="KW-0677">Repeat</keyword>
<keyword id="KW-0812">Transmembrane</keyword>
<keyword id="KW-1133">Transmembrane helix</keyword>
<keyword id="KW-0813">Transport</keyword>
<accession>Q5RAG2</accession>
<accession>Q5RA33</accession>
<feature type="chain" id="PRO_0000234346" description="Extended synaptotagmin-1">
    <location>
        <begin position="1"/>
        <end position="1104"/>
    </location>
</feature>
<feature type="topological domain" description="Cytoplasmic" evidence="6">
    <location>
        <begin position="1"/>
        <end position="38"/>
    </location>
</feature>
<feature type="transmembrane region" description="Helical" evidence="6">
    <location>
        <begin position="39"/>
        <end position="59"/>
    </location>
</feature>
<feature type="topological domain" description="Lumenal" evidence="6">
    <location>
        <begin position="60"/>
        <end position="62"/>
    </location>
</feature>
<feature type="transmembrane region" description="Helical" evidence="6">
    <location>
        <begin position="63"/>
        <end position="83"/>
    </location>
</feature>
<feature type="topological domain" description="Cytoplasmic" evidence="6">
    <location>
        <begin position="84"/>
        <end position="1104"/>
    </location>
</feature>
<feature type="domain" description="SMP-LTD" evidence="8">
    <location>
        <begin position="135"/>
        <end position="313"/>
    </location>
</feature>
<feature type="domain" description="C2 1" evidence="7">
    <location>
        <begin position="312"/>
        <end position="433"/>
    </location>
</feature>
<feature type="domain" description="C2 2" evidence="7">
    <location>
        <begin position="460"/>
        <end position="580"/>
    </location>
</feature>
<feature type="domain" description="C2 3" evidence="7">
    <location>
        <begin position="627"/>
        <end position="751"/>
    </location>
</feature>
<feature type="domain" description="C2 4" evidence="7">
    <location>
        <begin position="777"/>
        <end position="899"/>
    </location>
</feature>
<feature type="domain" description="C2 5" evidence="7">
    <location>
        <begin position="971"/>
        <end position="1093"/>
    </location>
</feature>
<feature type="region of interest" description="Disordered" evidence="9">
    <location>
        <begin position="1"/>
        <end position="47"/>
    </location>
</feature>
<feature type="region of interest" description="Disordered" evidence="9">
    <location>
        <begin position="617"/>
        <end position="641"/>
    </location>
</feature>
<feature type="region of interest" description="Disordered" evidence="9">
    <location>
        <begin position="813"/>
        <end position="833"/>
    </location>
</feature>
<feature type="region of interest" description="Disordered" evidence="9">
    <location>
        <begin position="924"/>
        <end position="950"/>
    </location>
</feature>
<feature type="region of interest" description="Required for phosphatidylinositol 4,5-bisphosphate-dependent location at the cell membrane" evidence="2">
    <location>
        <begin position="1018"/>
        <end position="1025"/>
    </location>
</feature>
<feature type="coiled-coil region" evidence="6">
    <location>
        <begin position="91"/>
        <end position="116"/>
    </location>
</feature>
<feature type="compositionally biased region" description="Polar residues" evidence="9">
    <location>
        <begin position="15"/>
        <end position="24"/>
    </location>
</feature>
<feature type="compositionally biased region" description="Gly residues" evidence="9">
    <location>
        <begin position="37"/>
        <end position="47"/>
    </location>
</feature>
<feature type="compositionally biased region" description="Low complexity" evidence="9">
    <location>
        <begin position="925"/>
        <end position="946"/>
    </location>
</feature>
<feature type="binding site" evidence="2">
    <location>
        <position position="344"/>
    </location>
    <ligand>
        <name>Ca(2+)</name>
        <dbReference type="ChEBI" id="CHEBI:29108"/>
        <label>1</label>
    </ligand>
</feature>
<feature type="binding site" evidence="2">
    <location>
        <position position="345"/>
    </location>
    <ligand>
        <name>Ca(2+)</name>
        <dbReference type="ChEBI" id="CHEBI:29108"/>
        <label>1</label>
    </ligand>
</feature>
<feature type="binding site" evidence="2">
    <location>
        <position position="345"/>
    </location>
    <ligand>
        <name>Ca(2+)</name>
        <dbReference type="ChEBI" id="CHEBI:29108"/>
        <label>2</label>
    </ligand>
</feature>
<feature type="binding site" evidence="2">
    <location>
        <position position="357"/>
    </location>
    <ligand>
        <name>Ca(2+)</name>
        <dbReference type="ChEBI" id="CHEBI:29108"/>
        <label>2</label>
    </ligand>
</feature>
<feature type="binding site" evidence="2">
    <location>
        <position position="404"/>
    </location>
    <ligand>
        <name>Ca(2+)</name>
        <dbReference type="ChEBI" id="CHEBI:29108"/>
        <label>1</label>
    </ligand>
</feature>
<feature type="binding site" evidence="2">
    <location>
        <position position="404"/>
    </location>
    <ligand>
        <name>Ca(2+)</name>
        <dbReference type="ChEBI" id="CHEBI:29108"/>
        <label>2</label>
    </ligand>
</feature>
<feature type="binding site" evidence="2">
    <location>
        <position position="406"/>
    </location>
    <ligand>
        <name>Ca(2+)</name>
        <dbReference type="ChEBI" id="CHEBI:29108"/>
        <label>1</label>
    </ligand>
</feature>
<feature type="binding site" evidence="2">
    <location>
        <position position="406"/>
    </location>
    <ligand>
        <name>Ca(2+)</name>
        <dbReference type="ChEBI" id="CHEBI:29108"/>
        <label>2</label>
    </ligand>
</feature>
<feature type="binding site" evidence="2">
    <location>
        <position position="406"/>
    </location>
    <ligand>
        <name>Ca(2+)</name>
        <dbReference type="ChEBI" id="CHEBI:29108"/>
        <label>3</label>
    </ligand>
</feature>
<feature type="binding site" evidence="2">
    <location>
        <position position="408"/>
    </location>
    <ligand>
        <name>Ca(2+)</name>
        <dbReference type="ChEBI" id="CHEBI:29108"/>
        <label>3</label>
    </ligand>
</feature>
<feature type="binding site" evidence="2">
    <location>
        <position position="410"/>
    </location>
    <ligand>
        <name>Ca(2+)</name>
        <dbReference type="ChEBI" id="CHEBI:29108"/>
        <label>3</label>
    </ligand>
</feature>
<feature type="binding site" evidence="2">
    <location>
        <position position="411"/>
    </location>
    <ligand>
        <name>Ca(2+)</name>
        <dbReference type="ChEBI" id="CHEBI:29108"/>
        <label>1</label>
    </ligand>
</feature>
<feature type="modified residue" description="N-acetylmethionine" evidence="4">
    <location>
        <position position="1"/>
    </location>
</feature>
<feature type="modified residue" description="Phosphoserine; by CDK5" evidence="3">
    <location>
        <position position="324"/>
    </location>
</feature>
<feature type="modified residue" description="N6-acetyllysine" evidence="4">
    <location>
        <position position="817"/>
    </location>
</feature>
<feature type="modified residue" description="Phosphoserine" evidence="4">
    <location>
        <position position="820"/>
    </location>
</feature>
<feature type="modified residue" description="Phosphoserine" evidence="4">
    <location>
        <position position="941"/>
    </location>
</feature>
<feature type="modified residue" description="Phosphothreonine" evidence="4">
    <location>
        <position position="948"/>
    </location>
</feature>
<feature type="modified residue" description="Phosphoserine" evidence="4">
    <location>
        <position position="949"/>
    </location>
</feature>
<feature type="modified residue" description="Phosphoserine" evidence="4">
    <location>
        <position position="963"/>
    </location>
</feature>
<feature type="modified residue" description="Phosphotyrosine" evidence="5">
    <location>
        <position position="1009"/>
    </location>
</feature>
<feature type="modified residue" description="Phosphoserine" evidence="4">
    <location>
        <position position="1034"/>
    </location>
</feature>
<feature type="sequence conflict" description="In Ref. 1; CAH91377." evidence="10" ref="1">
    <original>F</original>
    <variation>V</variation>
    <location>
        <position position="179"/>
    </location>
</feature>
<feature type="sequence conflict" description="In Ref. 1; CAH91377." evidence="10" ref="1">
    <original>R</original>
    <variation>H</variation>
    <location>
        <position position="192"/>
    </location>
</feature>
<feature type="sequence conflict" description="In Ref. 1; CAH91248." evidence="10" ref="1">
    <original>G</original>
    <variation>R</variation>
    <location>
        <position position="195"/>
    </location>
</feature>
<feature type="sequence conflict" description="In Ref. 1; CAH91377." evidence="10" ref="1">
    <original>V</original>
    <variation>I</variation>
    <location>
        <position position="947"/>
    </location>
</feature>
<feature type="sequence conflict" description="In Ref. 1; CAH91377." evidence="10" ref="1">
    <original>K</original>
    <variation>E</variation>
    <location>
        <position position="1023"/>
    </location>
</feature>
<feature type="sequence conflict" description="In Ref. 1; CAH91248." evidence="10" ref="1">
    <original>K</original>
    <variation>R</variation>
    <location>
        <position position="1054"/>
    </location>
</feature>
<reference key="1">
    <citation type="submission" date="2004-11" db="EMBL/GenBank/DDBJ databases">
        <authorList>
            <consortium name="The German cDNA consortium"/>
        </authorList>
    </citation>
    <scope>NUCLEOTIDE SEQUENCE [LARGE SCALE MRNA]</scope>
    <source>
        <tissue>Brain cortex</tissue>
    </source>
</reference>
<gene>
    <name type="primary">ESYT1</name>
    <name type="synonym">FAM62A</name>
</gene>
<sequence>MERSPGEGPSPSPTDQPSAPSDPTGQPPAAHAKPDPGSGGQPAGPGAAGEALAVLTSFGKRLLVLIPVYLAGAVGLSVGFVLFGLALYLGWRRVRDEKERSLRAARQLLDDEEQLTAKTLYMSHRELPAWVSFPDVEKAEWLNKIVAQVWPFLGQYMEKLLAETVAPAVRGSNPHLQTFTFTRVELGEKPLRIIGVKVHPGQRKEQILLDLNISYVGDVQIDVEVKKYFCKAGVKGMQLHGVLRVILEPLIGDLPIVGAVSMFFIRRPTLDINWTGMTNLLDIPGLSSLSDTMIMDSIAAFLVLPNRLLVPLVPDLQDVAQLRSPLPRGIIRIHLLAARGLTSKDKYVKGLIEGKSDPYALVRLGTQTFCSRVIDEELNPQWGETYEVMVHEVPGQEIEVEVFDKDPDKDDFLGRMKLDVGKVLQAGVLDDWFPLQGGQGQVHLRLEWLSLLSDAEKLEQVLQWNQGVSSRPEPPSAAILVVYLDRAQDLPLKKGNKEPNPMVQLSIQDVTQESKAVYSTNCPVWEEAFRFFLQDPQSQELDVQVKDDSRALTLGALTLPLARLLTAPELILDQWFQLSSSGPNSRLYMKLVMRILYLDSSEICFPTVPGCPGAWDVDSENPQRGSSVDAPPRPCHTTPDSQFGTEHVLRIHVLEAQDLIAKDRFLGGLVKGKSDPYVKLKLAGRSFRSHVVREDLNPRWNEVFEVIVTSVPGQELEVEVFDKDLDKDDFLGRCKVSLTTVLNSGFLDEWLTLEDVPSGRLHLRLERLTPRPTAAELEEVLQVNSLIQTQKSAELAAALLSIYMERAEDLPLRKGTKHPSPYATLTVGDTSHKTKTVSQTSAPVWDESASFLIRKPHTENLELQVRGEGTGVLGSLSLPLSELLVADQLCLDRWFTLNSGQGQVLLRAQLGILVSQHSGVEAHSHSYSHSSSSLSEEPELSGGPPHVTSSAPELRQRLTHVDSSLEAPAGPLGQVKLTVWYYSEERKLVSIVHGCRALRQNGRDPPDPYVSLLLLPDKNRGTKRKTSQKKRTLSPEFNERFEWELPLDEAQRRKLDVSVKSNPSFMSRERELLGKVQLDLAETDLSQGVARWYDLMDDKDKGSS</sequence>
<protein>
    <recommendedName>
        <fullName>Extended synaptotagmin-1</fullName>
        <shortName>E-Syt1</shortName>
    </recommendedName>
</protein>
<name>ESYT1_PONAB</name>
<comment type="function">
    <text evidence="2 4">Binds calcium (via the C2 domains) and translocates to sites of contact between the endoplasmic reticulum and the cell membrane in response to increased cytosolic calcium levels. Helps tether the endoplasmic reticulum to the cell membrane and promotes the formation of appositions between the endoplasmic reticulum and the cell membrane. Acts as an inhibitor of ADGRD1 G-protein-coupled receptor activity in absence of cytosolic calcium (By similarity). Binds glycerophospholipids in a barrel-like domain and may play a role in cellular lipid transport (By similarity).</text>
</comment>
<comment type="subunit">
    <text evidence="3 4">Interacts with ESYT2 and ESYT3. Interacts with ADGRD1; inhibiting the G-protein-coupled receptor activity of ADGRD1. Interaction with ADGRD1 is abolished when cytosolic calcium increases, relieving ADGRD1 G-protein-coupled receptor activity (By similarity). Interacts (phosphorylated form) with SLC2A4 (By similarity).</text>
</comment>
<comment type="subcellular location">
    <subcellularLocation>
        <location evidence="4">Endoplasmic reticulum membrane</location>
        <topology evidence="6">Multi-pass membrane protein</topology>
    </subcellularLocation>
    <subcellularLocation>
        <location evidence="4">Cell membrane</location>
        <topology evidence="4">Peripheral membrane protein</topology>
    </subcellularLocation>
    <text evidence="4">Localizes primarily to the endoplasmic reticulum. Recruited to sites of contact between the endoplasmic reticulum and the cell membrane in response to increased cytosolic calcium levels.</text>
</comment>
<comment type="domain">
    <text evidence="1">Anchored to the endoplasmic reticulum membrane by a transmembrane hairpin structure; both N-terminus and C-terminus are cytoplasmic.</text>
</comment>
<comment type="domain">
    <text evidence="1">The C2 domains mediate lipid and calcium binding. The N-terminal C2 domain binds calcium ions and is important for calcium-dependent lipid binding and interaction with membranes. Two calcium ions are bound at a high-affinity site and a third calcium ion is bound with lower affinity. May bind up to four calcium ions. In contrast, the second C2 domain apparently does not bind calcium. The third C2 domain mediates interaction with membranes enriched in phosphatidylinositol 4,5-bisphosphate and is required for translocation to the cell membrane in response to increased cytosolic calcium levels (By similarity).</text>
</comment>
<comment type="domain">
    <text evidence="2">The SMP-LTD domain is a barrel-like domain that binds glycerophospholipids in its interior (By similarity).</text>
</comment>
<comment type="PTM">
    <text evidence="1">Phosphorylated on Ser residues in insulin-treated adipocytes (in vitro); this promotes interaction with SLC2A4.</text>
</comment>
<comment type="similarity">
    <text evidence="10">Belongs to the extended synaptotagmin family.</text>
</comment>
<proteinExistence type="evidence at transcript level"/>
<evidence type="ECO:0000250" key="1"/>
<evidence type="ECO:0000250" key="2">
    <source>
        <dbReference type="UniProtKB" id="A0FGR8"/>
    </source>
</evidence>
<evidence type="ECO:0000250" key="3">
    <source>
        <dbReference type="UniProtKB" id="Q3U7R1"/>
    </source>
</evidence>
<evidence type="ECO:0000250" key="4">
    <source>
        <dbReference type="UniProtKB" id="Q9BSJ8"/>
    </source>
</evidence>
<evidence type="ECO:0000250" key="5">
    <source>
        <dbReference type="UniProtKB" id="Q9Z1X1"/>
    </source>
</evidence>
<evidence type="ECO:0000255" key="6"/>
<evidence type="ECO:0000255" key="7">
    <source>
        <dbReference type="PROSITE-ProRule" id="PRU00041"/>
    </source>
</evidence>
<evidence type="ECO:0000255" key="8">
    <source>
        <dbReference type="PROSITE-ProRule" id="PRU01194"/>
    </source>
</evidence>
<evidence type="ECO:0000256" key="9">
    <source>
        <dbReference type="SAM" id="MobiDB-lite"/>
    </source>
</evidence>
<evidence type="ECO:0000305" key="10"/>